<accession>Q9A1E3</accession>
<accession>Q490S7</accession>
<name>METN_STRP1</name>
<organism>
    <name type="scientific">Streptococcus pyogenes serotype M1</name>
    <dbReference type="NCBI Taxonomy" id="301447"/>
    <lineage>
        <taxon>Bacteria</taxon>
        <taxon>Bacillati</taxon>
        <taxon>Bacillota</taxon>
        <taxon>Bacilli</taxon>
        <taxon>Lactobacillales</taxon>
        <taxon>Streptococcaceae</taxon>
        <taxon>Streptococcus</taxon>
    </lineage>
</organism>
<keyword id="KW-0029">Amino-acid transport</keyword>
<keyword id="KW-0067">ATP-binding</keyword>
<keyword id="KW-1003">Cell membrane</keyword>
<keyword id="KW-0472">Membrane</keyword>
<keyword id="KW-0547">Nucleotide-binding</keyword>
<keyword id="KW-1185">Reference proteome</keyword>
<keyword id="KW-1278">Translocase</keyword>
<keyword id="KW-0813">Transport</keyword>
<evidence type="ECO:0000255" key="1">
    <source>
        <dbReference type="HAMAP-Rule" id="MF_01719"/>
    </source>
</evidence>
<comment type="function">
    <text evidence="1">Part of the ABC transporter complex MetNIQ involved in methionine import. Responsible for energy coupling to the transport system.</text>
</comment>
<comment type="catalytic activity">
    <reaction evidence="1">
        <text>L-methionine(out) + ATP + H2O = L-methionine(in) + ADP + phosphate + H(+)</text>
        <dbReference type="Rhea" id="RHEA:29779"/>
        <dbReference type="ChEBI" id="CHEBI:15377"/>
        <dbReference type="ChEBI" id="CHEBI:15378"/>
        <dbReference type="ChEBI" id="CHEBI:30616"/>
        <dbReference type="ChEBI" id="CHEBI:43474"/>
        <dbReference type="ChEBI" id="CHEBI:57844"/>
        <dbReference type="ChEBI" id="CHEBI:456216"/>
        <dbReference type="EC" id="7.4.2.11"/>
    </reaction>
</comment>
<comment type="catalytic activity">
    <reaction evidence="1">
        <text>D-methionine(out) + ATP + H2O = D-methionine(in) + ADP + phosphate + H(+)</text>
        <dbReference type="Rhea" id="RHEA:29767"/>
        <dbReference type="ChEBI" id="CHEBI:15377"/>
        <dbReference type="ChEBI" id="CHEBI:15378"/>
        <dbReference type="ChEBI" id="CHEBI:30616"/>
        <dbReference type="ChEBI" id="CHEBI:43474"/>
        <dbReference type="ChEBI" id="CHEBI:57932"/>
        <dbReference type="ChEBI" id="CHEBI:456216"/>
        <dbReference type="EC" id="7.4.2.11"/>
    </reaction>
</comment>
<comment type="subunit">
    <text evidence="1">The complex is composed of two ATP-binding proteins (MetN), two transmembrane proteins (MetI) and a solute-binding protein (MetQ).</text>
</comment>
<comment type="subcellular location">
    <subcellularLocation>
        <location evidence="1">Cell membrane</location>
        <topology evidence="1">Peripheral membrane protein</topology>
    </subcellularLocation>
</comment>
<comment type="similarity">
    <text evidence="1">Belongs to the ABC transporter superfamily. Methionine importer (TC 3.A.1.24) family.</text>
</comment>
<dbReference type="EC" id="7.4.2.11" evidence="1"/>
<dbReference type="EMBL" id="AE004092">
    <property type="protein sequence ID" value="AAK33379.1"/>
    <property type="molecule type" value="Genomic_DNA"/>
</dbReference>
<dbReference type="EMBL" id="CP000017">
    <property type="protein sequence ID" value="AAZ50891.1"/>
    <property type="molecule type" value="Genomic_DNA"/>
</dbReference>
<dbReference type="RefSeq" id="NP_268658.1">
    <property type="nucleotide sequence ID" value="NC_002737.2"/>
</dbReference>
<dbReference type="SMR" id="Q9A1E3"/>
<dbReference type="PaxDb" id="1314-HKU360_00311"/>
<dbReference type="KEGG" id="spy:SPy_0320"/>
<dbReference type="KEGG" id="spz:M5005_Spy0272"/>
<dbReference type="PATRIC" id="fig|160490.10.peg.279"/>
<dbReference type="HOGENOM" id="CLU_000604_1_3_9"/>
<dbReference type="OMA" id="FANPKHA"/>
<dbReference type="Proteomes" id="UP000000750">
    <property type="component" value="Chromosome"/>
</dbReference>
<dbReference type="GO" id="GO:0005886">
    <property type="term" value="C:plasma membrane"/>
    <property type="evidence" value="ECO:0007669"/>
    <property type="project" value="UniProtKB-SubCell"/>
</dbReference>
<dbReference type="GO" id="GO:0033232">
    <property type="term" value="F:ABC-type D-methionine transporter activity"/>
    <property type="evidence" value="ECO:0007669"/>
    <property type="project" value="UniProtKB-EC"/>
</dbReference>
<dbReference type="GO" id="GO:0005524">
    <property type="term" value="F:ATP binding"/>
    <property type="evidence" value="ECO:0007669"/>
    <property type="project" value="UniProtKB-KW"/>
</dbReference>
<dbReference type="GO" id="GO:0016887">
    <property type="term" value="F:ATP hydrolysis activity"/>
    <property type="evidence" value="ECO:0007669"/>
    <property type="project" value="InterPro"/>
</dbReference>
<dbReference type="CDD" id="cd03258">
    <property type="entry name" value="ABC_MetN_methionine_transporter"/>
    <property type="match status" value="1"/>
</dbReference>
<dbReference type="Gene3D" id="3.30.70.260">
    <property type="match status" value="1"/>
</dbReference>
<dbReference type="Gene3D" id="3.40.50.300">
    <property type="entry name" value="P-loop containing nucleotide triphosphate hydrolases"/>
    <property type="match status" value="1"/>
</dbReference>
<dbReference type="InterPro" id="IPR003593">
    <property type="entry name" value="AAA+_ATPase"/>
</dbReference>
<dbReference type="InterPro" id="IPR003439">
    <property type="entry name" value="ABC_transporter-like_ATP-bd"/>
</dbReference>
<dbReference type="InterPro" id="IPR017871">
    <property type="entry name" value="ABC_transporter-like_CS"/>
</dbReference>
<dbReference type="InterPro" id="IPR045865">
    <property type="entry name" value="ACT-like_dom_sf"/>
</dbReference>
<dbReference type="InterPro" id="IPR041701">
    <property type="entry name" value="MetN_ABC"/>
</dbReference>
<dbReference type="InterPro" id="IPR050086">
    <property type="entry name" value="MetN_ABC_transporter-like"/>
</dbReference>
<dbReference type="InterPro" id="IPR018449">
    <property type="entry name" value="NIL_domain"/>
</dbReference>
<dbReference type="InterPro" id="IPR027417">
    <property type="entry name" value="P-loop_NTPase"/>
</dbReference>
<dbReference type="PANTHER" id="PTHR43166">
    <property type="entry name" value="AMINO ACID IMPORT ATP-BINDING PROTEIN"/>
    <property type="match status" value="1"/>
</dbReference>
<dbReference type="PANTHER" id="PTHR43166:SF30">
    <property type="entry name" value="METHIONINE IMPORT ATP-BINDING PROTEIN METN"/>
    <property type="match status" value="1"/>
</dbReference>
<dbReference type="Pfam" id="PF00005">
    <property type="entry name" value="ABC_tran"/>
    <property type="match status" value="1"/>
</dbReference>
<dbReference type="Pfam" id="PF09383">
    <property type="entry name" value="NIL"/>
    <property type="match status" value="1"/>
</dbReference>
<dbReference type="SMART" id="SM00382">
    <property type="entry name" value="AAA"/>
    <property type="match status" value="1"/>
</dbReference>
<dbReference type="SMART" id="SM00930">
    <property type="entry name" value="NIL"/>
    <property type="match status" value="1"/>
</dbReference>
<dbReference type="SUPFAM" id="SSF55021">
    <property type="entry name" value="ACT-like"/>
    <property type="match status" value="1"/>
</dbReference>
<dbReference type="SUPFAM" id="SSF52540">
    <property type="entry name" value="P-loop containing nucleoside triphosphate hydrolases"/>
    <property type="match status" value="1"/>
</dbReference>
<dbReference type="PROSITE" id="PS00211">
    <property type="entry name" value="ABC_TRANSPORTER_1"/>
    <property type="match status" value="1"/>
</dbReference>
<dbReference type="PROSITE" id="PS50893">
    <property type="entry name" value="ABC_TRANSPORTER_2"/>
    <property type="match status" value="1"/>
</dbReference>
<dbReference type="PROSITE" id="PS51264">
    <property type="entry name" value="METN"/>
    <property type="match status" value="1"/>
</dbReference>
<feature type="chain" id="PRO_0000270417" description="Methionine import ATP-binding protein MetN">
    <location>
        <begin position="1"/>
        <end position="354"/>
    </location>
</feature>
<feature type="domain" description="ABC transporter" evidence="1">
    <location>
        <begin position="8"/>
        <end position="250"/>
    </location>
</feature>
<feature type="binding site" evidence="1">
    <location>
        <begin position="42"/>
        <end position="49"/>
    </location>
    <ligand>
        <name>ATP</name>
        <dbReference type="ChEBI" id="CHEBI:30616"/>
    </ligand>
</feature>
<proteinExistence type="inferred from homology"/>
<protein>
    <recommendedName>
        <fullName evidence="1">Methionine import ATP-binding protein MetN</fullName>
        <ecNumber evidence="1">7.4.2.11</ecNumber>
    </recommendedName>
</protein>
<reference key="1">
    <citation type="journal article" date="2001" name="Proc. Natl. Acad. Sci. U.S.A.">
        <title>Complete genome sequence of an M1 strain of Streptococcus pyogenes.</title>
        <authorList>
            <person name="Ferretti J.J."/>
            <person name="McShan W.M."/>
            <person name="Ajdic D.J."/>
            <person name="Savic D.J."/>
            <person name="Savic G."/>
            <person name="Lyon K."/>
            <person name="Primeaux C."/>
            <person name="Sezate S."/>
            <person name="Suvorov A.N."/>
            <person name="Kenton S."/>
            <person name="Lai H.S."/>
            <person name="Lin S.P."/>
            <person name="Qian Y."/>
            <person name="Jia H.G."/>
            <person name="Najar F.Z."/>
            <person name="Ren Q."/>
            <person name="Zhu H."/>
            <person name="Song L."/>
            <person name="White J."/>
            <person name="Yuan X."/>
            <person name="Clifton S.W."/>
            <person name="Roe B.A."/>
            <person name="McLaughlin R.E."/>
        </authorList>
    </citation>
    <scope>NUCLEOTIDE SEQUENCE [LARGE SCALE GENOMIC DNA]</scope>
    <source>
        <strain>ATCC 700294 / SF370 / Serotype M1</strain>
    </source>
</reference>
<reference key="2">
    <citation type="journal article" date="2005" name="J. Infect. Dis.">
        <title>Evolutionary origin and emergence of a highly successful clone of serotype M1 group A Streptococcus involved multiple horizontal gene transfer events.</title>
        <authorList>
            <person name="Sumby P."/>
            <person name="Porcella S.F."/>
            <person name="Madrigal A.G."/>
            <person name="Barbian K.D."/>
            <person name="Virtaneva K."/>
            <person name="Ricklefs S.M."/>
            <person name="Sturdevant D.E."/>
            <person name="Graham M.R."/>
            <person name="Vuopio-Varkila J."/>
            <person name="Hoe N.P."/>
            <person name="Musser J.M."/>
        </authorList>
    </citation>
    <scope>NUCLEOTIDE SEQUENCE [LARGE SCALE GENOMIC DNA]</scope>
    <source>
        <strain>ATCC BAA-947 / MGAS5005 / Serotype M1</strain>
    </source>
</reference>
<sequence length="354" mass="38923">MNEAIIQLDHIDITFRQKKRVIEAVKDVTVHINQGDIYGIVGYSGAGKSTLVRVINLLQAPTNGKITVDGDVTFDQGKIQLSADALRQKRRDIGMIFQHFNLMAQKTAKENVAFALRHSSLSKTEKEHKVIELLELVGLSERADNYPAQLSGGQKQRVAIARALANDPKILISDEATSALDPKTTKQILALLQELNRKLGLTIVMITHEMQIVKDICNRVAVMQNGVLIEEGSVLDIFSNPKEALTQEFITTATGIDEALEKINQQDIVKHLPANALLAQLKYAGTSTDEPLLNSIYRQFEVTANILYGNIEILDHIPVGDMIVVLEGQAENILAAEKALHEAGVDVSILKRGA</sequence>
<gene>
    <name evidence="1" type="primary">metN</name>
    <name type="ordered locus">SPy_0320</name>
    <name type="ordered locus">M5005_Spy0272</name>
</gene>